<comment type="function">
    <text evidence="1">Catalyzes the transfer of the enolpyruvyl moiety of phosphoenolpyruvate (PEP) to the 5-hydroxyl of shikimate-3-phosphate (S3P) to produce enolpyruvyl shikimate-3-phosphate and inorganic phosphate.</text>
</comment>
<comment type="catalytic activity">
    <reaction evidence="1">
        <text>3-phosphoshikimate + phosphoenolpyruvate = 5-O-(1-carboxyvinyl)-3-phosphoshikimate + phosphate</text>
        <dbReference type="Rhea" id="RHEA:21256"/>
        <dbReference type="ChEBI" id="CHEBI:43474"/>
        <dbReference type="ChEBI" id="CHEBI:57701"/>
        <dbReference type="ChEBI" id="CHEBI:58702"/>
        <dbReference type="ChEBI" id="CHEBI:145989"/>
        <dbReference type="EC" id="2.5.1.19"/>
    </reaction>
    <physiologicalReaction direction="left-to-right" evidence="1">
        <dbReference type="Rhea" id="RHEA:21257"/>
    </physiologicalReaction>
</comment>
<comment type="pathway">
    <text evidence="1">Metabolic intermediate biosynthesis; chorismate biosynthesis; chorismate from D-erythrose 4-phosphate and phosphoenolpyruvate: step 6/7.</text>
</comment>
<comment type="subunit">
    <text evidence="1">Monomer.</text>
</comment>
<comment type="subcellular location">
    <subcellularLocation>
        <location evidence="1">Cytoplasm</location>
    </subcellularLocation>
</comment>
<comment type="similarity">
    <text evidence="1">Belongs to the EPSP synthase family.</text>
</comment>
<feature type="chain" id="PRO_0000088310" description="3-phosphoshikimate 1-carboxyvinyltransferase">
    <location>
        <begin position="1"/>
        <end position="440"/>
    </location>
</feature>
<feature type="active site" description="Proton acceptor" evidence="1">
    <location>
        <position position="328"/>
    </location>
</feature>
<feature type="binding site" evidence="1">
    <location>
        <position position="31"/>
    </location>
    <ligand>
        <name>3-phosphoshikimate</name>
        <dbReference type="ChEBI" id="CHEBI:145989"/>
    </ligand>
</feature>
<feature type="binding site" evidence="1">
    <location>
        <position position="31"/>
    </location>
    <ligand>
        <name>phosphoenolpyruvate</name>
        <dbReference type="ChEBI" id="CHEBI:58702"/>
    </ligand>
</feature>
<feature type="binding site" evidence="1">
    <location>
        <position position="32"/>
    </location>
    <ligand>
        <name>3-phosphoshikimate</name>
        <dbReference type="ChEBI" id="CHEBI:145989"/>
    </ligand>
</feature>
<feature type="binding site" evidence="1">
    <location>
        <position position="36"/>
    </location>
    <ligand>
        <name>3-phosphoshikimate</name>
        <dbReference type="ChEBI" id="CHEBI:145989"/>
    </ligand>
</feature>
<feature type="binding site" evidence="1">
    <location>
        <position position="104"/>
    </location>
    <ligand>
        <name>phosphoenolpyruvate</name>
        <dbReference type="ChEBI" id="CHEBI:58702"/>
    </ligand>
</feature>
<feature type="binding site" evidence="1">
    <location>
        <position position="133"/>
    </location>
    <ligand>
        <name>phosphoenolpyruvate</name>
        <dbReference type="ChEBI" id="CHEBI:58702"/>
    </ligand>
</feature>
<feature type="binding site" evidence="1">
    <location>
        <position position="178"/>
    </location>
    <ligand>
        <name>3-phosphoshikimate</name>
        <dbReference type="ChEBI" id="CHEBI:145989"/>
    </ligand>
</feature>
<feature type="binding site" evidence="1">
    <location>
        <position position="180"/>
    </location>
    <ligand>
        <name>3-phosphoshikimate</name>
        <dbReference type="ChEBI" id="CHEBI:145989"/>
    </ligand>
</feature>
<feature type="binding site" evidence="1">
    <location>
        <position position="180"/>
    </location>
    <ligand>
        <name>phosphoenolpyruvate</name>
        <dbReference type="ChEBI" id="CHEBI:58702"/>
    </ligand>
</feature>
<feature type="binding site" evidence="1">
    <location>
        <position position="328"/>
    </location>
    <ligand>
        <name>3-phosphoshikimate</name>
        <dbReference type="ChEBI" id="CHEBI:145989"/>
    </ligand>
</feature>
<feature type="binding site" evidence="1">
    <location>
        <position position="355"/>
    </location>
    <ligand>
        <name>3-phosphoshikimate</name>
        <dbReference type="ChEBI" id="CHEBI:145989"/>
    </ligand>
</feature>
<feature type="binding site" evidence="1">
    <location>
        <position position="359"/>
    </location>
    <ligand>
        <name>phosphoenolpyruvate</name>
        <dbReference type="ChEBI" id="CHEBI:58702"/>
    </ligand>
</feature>
<feature type="binding site" evidence="1">
    <location>
        <position position="401"/>
    </location>
    <ligand>
        <name>phosphoenolpyruvate</name>
        <dbReference type="ChEBI" id="CHEBI:58702"/>
    </ligand>
</feature>
<evidence type="ECO:0000255" key="1">
    <source>
        <dbReference type="HAMAP-Rule" id="MF_00210"/>
    </source>
</evidence>
<proteinExistence type="inferred from homology"/>
<protein>
    <recommendedName>
        <fullName evidence="1">3-phosphoshikimate 1-carboxyvinyltransferase</fullName>
        <ecNumber evidence="1">2.5.1.19</ecNumber>
    </recommendedName>
    <alternativeName>
        <fullName evidence="1">5-enolpyruvylshikimate-3-phosphate synthase</fullName>
        <shortName evidence="1">EPSP synthase</shortName>
        <shortName evidence="1">EPSPS</shortName>
    </alternativeName>
</protein>
<reference key="1">
    <citation type="journal article" date="2002" name="DNA Res.">
        <title>Complete genome structure of the thermophilic cyanobacterium Thermosynechococcus elongatus BP-1.</title>
        <authorList>
            <person name="Nakamura Y."/>
            <person name="Kaneko T."/>
            <person name="Sato S."/>
            <person name="Ikeuchi M."/>
            <person name="Katoh H."/>
            <person name="Sasamoto S."/>
            <person name="Watanabe A."/>
            <person name="Iriguchi M."/>
            <person name="Kawashima K."/>
            <person name="Kimura T."/>
            <person name="Kishida Y."/>
            <person name="Kiyokawa C."/>
            <person name="Kohara M."/>
            <person name="Matsumoto M."/>
            <person name="Matsuno A."/>
            <person name="Nakazaki N."/>
            <person name="Shimpo S."/>
            <person name="Sugimoto M."/>
            <person name="Takeuchi C."/>
            <person name="Yamada M."/>
            <person name="Tabata S."/>
        </authorList>
    </citation>
    <scope>NUCLEOTIDE SEQUENCE [LARGE SCALE GENOMIC DNA]</scope>
    <source>
        <strain>NIES-2133 / IAM M-273 / BP-1</strain>
    </source>
</reference>
<dbReference type="EC" id="2.5.1.19" evidence="1"/>
<dbReference type="EMBL" id="BA000039">
    <property type="protein sequence ID" value="BAC07895.1"/>
    <property type="molecule type" value="Genomic_DNA"/>
</dbReference>
<dbReference type="RefSeq" id="NP_681133.1">
    <property type="nucleotide sequence ID" value="NC_004113.1"/>
</dbReference>
<dbReference type="RefSeq" id="WP_011056198.1">
    <property type="nucleotide sequence ID" value="NC_004113.1"/>
</dbReference>
<dbReference type="SMR" id="Q8DLY3"/>
<dbReference type="STRING" id="197221.gene:10746927"/>
<dbReference type="EnsemblBacteria" id="BAC07895">
    <property type="protein sequence ID" value="BAC07895"/>
    <property type="gene ID" value="BAC07895"/>
</dbReference>
<dbReference type="KEGG" id="tel:tlr0343"/>
<dbReference type="PATRIC" id="fig|197221.4.peg.360"/>
<dbReference type="eggNOG" id="COG0128">
    <property type="taxonomic scope" value="Bacteria"/>
</dbReference>
<dbReference type="UniPathway" id="UPA00053">
    <property type="reaction ID" value="UER00089"/>
</dbReference>
<dbReference type="Proteomes" id="UP000000440">
    <property type="component" value="Chromosome"/>
</dbReference>
<dbReference type="GO" id="GO:0005737">
    <property type="term" value="C:cytoplasm"/>
    <property type="evidence" value="ECO:0007669"/>
    <property type="project" value="UniProtKB-SubCell"/>
</dbReference>
<dbReference type="GO" id="GO:0003866">
    <property type="term" value="F:3-phosphoshikimate 1-carboxyvinyltransferase activity"/>
    <property type="evidence" value="ECO:0007669"/>
    <property type="project" value="UniProtKB-UniRule"/>
</dbReference>
<dbReference type="GO" id="GO:0008652">
    <property type="term" value="P:amino acid biosynthetic process"/>
    <property type="evidence" value="ECO:0007669"/>
    <property type="project" value="UniProtKB-KW"/>
</dbReference>
<dbReference type="GO" id="GO:0009073">
    <property type="term" value="P:aromatic amino acid family biosynthetic process"/>
    <property type="evidence" value="ECO:0007669"/>
    <property type="project" value="UniProtKB-KW"/>
</dbReference>
<dbReference type="GO" id="GO:0009423">
    <property type="term" value="P:chorismate biosynthetic process"/>
    <property type="evidence" value="ECO:0007669"/>
    <property type="project" value="UniProtKB-UniRule"/>
</dbReference>
<dbReference type="CDD" id="cd01556">
    <property type="entry name" value="EPSP_synthase"/>
    <property type="match status" value="1"/>
</dbReference>
<dbReference type="FunFam" id="3.65.10.10:FF:000005">
    <property type="entry name" value="3-phosphoshikimate 1-carboxyvinyltransferase"/>
    <property type="match status" value="1"/>
</dbReference>
<dbReference type="FunFam" id="3.65.10.10:FF:000006">
    <property type="entry name" value="3-phosphoshikimate 1-carboxyvinyltransferase"/>
    <property type="match status" value="1"/>
</dbReference>
<dbReference type="Gene3D" id="3.65.10.10">
    <property type="entry name" value="Enolpyruvate transferase domain"/>
    <property type="match status" value="2"/>
</dbReference>
<dbReference type="HAMAP" id="MF_00210">
    <property type="entry name" value="EPSP_synth"/>
    <property type="match status" value="1"/>
</dbReference>
<dbReference type="InterPro" id="IPR001986">
    <property type="entry name" value="Enolpyruvate_Tfrase_dom"/>
</dbReference>
<dbReference type="InterPro" id="IPR036968">
    <property type="entry name" value="Enolpyruvate_Tfrase_sf"/>
</dbReference>
<dbReference type="InterPro" id="IPR006264">
    <property type="entry name" value="EPSP_synthase"/>
</dbReference>
<dbReference type="InterPro" id="IPR023193">
    <property type="entry name" value="EPSP_synthase_CS"/>
</dbReference>
<dbReference type="InterPro" id="IPR013792">
    <property type="entry name" value="RNA3'P_cycl/enolpyr_Trfase_a/b"/>
</dbReference>
<dbReference type="NCBIfam" id="TIGR01356">
    <property type="entry name" value="aroA"/>
    <property type="match status" value="1"/>
</dbReference>
<dbReference type="PANTHER" id="PTHR21090">
    <property type="entry name" value="AROM/DEHYDROQUINATE SYNTHASE"/>
    <property type="match status" value="1"/>
</dbReference>
<dbReference type="PANTHER" id="PTHR21090:SF5">
    <property type="entry name" value="PENTAFUNCTIONAL AROM POLYPEPTIDE"/>
    <property type="match status" value="1"/>
</dbReference>
<dbReference type="Pfam" id="PF00275">
    <property type="entry name" value="EPSP_synthase"/>
    <property type="match status" value="1"/>
</dbReference>
<dbReference type="PIRSF" id="PIRSF000505">
    <property type="entry name" value="EPSPS"/>
    <property type="match status" value="1"/>
</dbReference>
<dbReference type="SUPFAM" id="SSF55205">
    <property type="entry name" value="EPT/RTPC-like"/>
    <property type="match status" value="1"/>
</dbReference>
<dbReference type="PROSITE" id="PS00885">
    <property type="entry name" value="EPSP_SYNTHASE_2"/>
    <property type="match status" value="1"/>
</dbReference>
<gene>
    <name evidence="1" type="primary">aroA</name>
    <name type="ordered locus">tlr0343</name>
</gene>
<keyword id="KW-0028">Amino-acid biosynthesis</keyword>
<keyword id="KW-0057">Aromatic amino acid biosynthesis</keyword>
<keyword id="KW-0963">Cytoplasm</keyword>
<keyword id="KW-1185">Reference proteome</keyword>
<keyword id="KW-0808">Transferase</keyword>
<sequence length="440" mass="46574">MAVIQITSDDTWQIQADGHPLRGTLQVPGDKSISHRALMLGAMAEGTTQITGLLVGEDTCSTASCFRALGAEISPLNATAVTVQGLGMGRLQEPGDVMNAGNSGTTMRLLLGVLAAQTGRFFTLTGDASLRSRPMARVVTPLLQMGAQIWGRQHHSRAPLAILGQPLEPITYYSPIASAQVKSALLLAALHTEGTTLIREPHRSRDHSERMLQAFGARLSVDEATCTVSLEGPAVLKGQKVIVPGDISSAAFWLVAASIIPDSELLLTNVGVNPTRTGILDVLWAMGAEITLENERLVTGEPVADLRVRSARLKSTRIGGELIPRLIDEIPILAVAAAFAEGVTEIRDAAELRVKESDRLKAVATELQKMGAKVTELSDGLDIQGGGPLQGTHLETYGDHRMAMSLAIAALNAKGTSEIHNASAAAVSYPEFVTVLQQIA</sequence>
<organism>
    <name type="scientific">Thermosynechococcus vestitus (strain NIES-2133 / IAM M-273 / BP-1)</name>
    <dbReference type="NCBI Taxonomy" id="197221"/>
    <lineage>
        <taxon>Bacteria</taxon>
        <taxon>Bacillati</taxon>
        <taxon>Cyanobacteriota</taxon>
        <taxon>Cyanophyceae</taxon>
        <taxon>Acaryochloridales</taxon>
        <taxon>Thermosynechococcaceae</taxon>
        <taxon>Thermosynechococcus</taxon>
    </lineage>
</organism>
<name>AROA_THEVB</name>
<accession>Q8DLY3</accession>